<name>FMFL_AERHY</name>
<gene>
    <name type="primary">aerA</name>
    <name type="synonym">fxp</name>
</gene>
<protein>
    <recommendedName>
        <fullName>Flexible pilin</fullName>
    </recommendedName>
</protein>
<accession>P19369</accession>
<evidence type="ECO:0000269" key="1">
    <source>
    </source>
</evidence>
<organism>
    <name type="scientific">Aeromonas hydrophila</name>
    <dbReference type="NCBI Taxonomy" id="644"/>
    <lineage>
        <taxon>Bacteria</taxon>
        <taxon>Pseudomonadati</taxon>
        <taxon>Pseudomonadota</taxon>
        <taxon>Gammaproteobacteria</taxon>
        <taxon>Aeromonadales</taxon>
        <taxon>Aeromonadaceae</taxon>
        <taxon>Aeromonas</taxon>
    </lineage>
</organism>
<proteinExistence type="evidence at protein level"/>
<feature type="signal peptide" evidence="1">
    <location>
        <begin position="1"/>
        <end position="24"/>
    </location>
</feature>
<feature type="chain" id="PRO_0000009150" description="Flexible pilin">
    <location>
        <begin position="25"/>
        <end position="70"/>
    </location>
</feature>
<comment type="function">
    <text>Fimbriae (also called pili) are polar filaments radiating from the surface of the bacterium to a length of 0.5-1.5 micrometers and numbering 100-300 per cell. They enable bacteria to colonize the epithelium of specific host organs. Flexible pili possess hemagglutinating function.</text>
</comment>
<comment type="subunit">
    <text>Homomer.</text>
</comment>
<comment type="subcellular location">
    <subcellularLocation>
        <location>Fimbrium</location>
    </subcellularLocation>
</comment>
<comment type="miscellaneous">
    <text>A.hydrophila possesses two distinctive pilus types: 'straight' pili appears as brittle, rod-like filaments, whereas 'flexible' pili are supple and curvilinear.</text>
</comment>
<keyword id="KW-0903">Direct protein sequencing</keyword>
<keyword id="KW-0281">Fimbrium</keyword>
<keyword id="KW-0732">Signal</keyword>
<dbReference type="EMBL" id="X63115">
    <property type="protein sequence ID" value="CAA44829.1"/>
    <property type="molecule type" value="Genomic_DNA"/>
</dbReference>
<dbReference type="PIR" id="S25190">
    <property type="entry name" value="S25190"/>
</dbReference>
<dbReference type="RefSeq" id="WP_029303045.1">
    <property type="nucleotide sequence ID" value="NZ_JDWC01000010.1"/>
</dbReference>
<dbReference type="SMR" id="P19369"/>
<dbReference type="GO" id="GO:0009289">
    <property type="term" value="C:pilus"/>
    <property type="evidence" value="ECO:0007669"/>
    <property type="project" value="UniProtKB-SubCell"/>
</dbReference>
<sequence length="70" mass="7003">MPNFFRNGCIALVGSVAAMGAAHAEGGIAEAAGKALDSAQSDVTITAPKVMMVVATVVGVGILINMMRKA</sequence>
<reference key="1">
    <citation type="journal article" date="1992" name="Mol. Microbiol.">
        <title>Cloning and characterization of fxp, the flexible pilin gene of Aeromonas hydrophila.</title>
        <authorList>
            <person name="Ho A.S.Y."/>
            <person name="Sohel I."/>
            <person name="Schoolnik G.K."/>
        </authorList>
    </citation>
    <scope>NUCLEOTIDE SEQUENCE [GENOMIC DNA]</scope>
    <source>
        <strain>Ah26</strain>
    </source>
</reference>
<reference key="2">
    <citation type="journal article" date="1990" name="J. Exp. Med.">
        <title>The pili of Aeromonas hydrophila: identification of an environmentally regulated 'mini pilin'.</title>
        <authorList>
            <person name="Ho A.S.Y."/>
            <person name="Mietzner T.A."/>
            <person name="Smith A.J."/>
            <person name="Schoolnik G.K."/>
        </authorList>
    </citation>
    <scope>PROTEIN SEQUENCE OF 25-70</scope>
    <source>
        <strain>Ah26</strain>
    </source>
</reference>